<sequence length="445" mass="49960">MAELKYISGFGNECASEDPRCPGSLPKGQNNPQVCPYNLYAEQLSGSAFTCPRNTNKRSWLYRILPSVSHKPFESIDQGHVTHNWDEVGPDPNQLRWKPFEIPKASEKKVDFVSGLYTLCGAGDIKSNNGLAVHIFLCNSSMENRCFYNSDGDFLIVPQKGKLLIYTEFGKMSLQPNEICVIQRGMRFSVDVFEETRGYILEVYGVHFELPDLGPIGANGLANPRDFLIPVAWYEDRRVPGGYTVINKFQGKLFACKQDVSPFNVVAWHGNYTPYKYNLENFMVINAVAFDHADPSIFTVLTAKSLRPGVAIADFVIFPPRWGVADKTFRPPYYHRNCMSEFMGLIKGHYEAKQGGFLPGGGSLHSAMTPHGPDADCFEKASKAKLEPERIADGTMAFMFESSLSLAVTKWGLKTCSCLDENYYKCWEPLRSHFTPNSRSPTEPK</sequence>
<organism>
    <name type="scientific">Mus musculus</name>
    <name type="common">Mouse</name>
    <dbReference type="NCBI Taxonomy" id="10090"/>
    <lineage>
        <taxon>Eukaryota</taxon>
        <taxon>Metazoa</taxon>
        <taxon>Chordata</taxon>
        <taxon>Craniata</taxon>
        <taxon>Vertebrata</taxon>
        <taxon>Euteleostomi</taxon>
        <taxon>Mammalia</taxon>
        <taxon>Eutheria</taxon>
        <taxon>Euarchontoglires</taxon>
        <taxon>Glires</taxon>
        <taxon>Rodentia</taxon>
        <taxon>Myomorpha</taxon>
        <taxon>Muroidea</taxon>
        <taxon>Muridae</taxon>
        <taxon>Murinae</taxon>
        <taxon>Mus</taxon>
        <taxon>Mus</taxon>
    </lineage>
</organism>
<feature type="chain" id="PRO_0000220241" description="Homogentisate 1,2-dioxygenase">
    <location>
        <begin position="1"/>
        <end position="445"/>
    </location>
</feature>
<feature type="binding site" evidence="1">
    <location>
        <position position="335"/>
    </location>
    <ligand>
        <name>Fe cation</name>
        <dbReference type="ChEBI" id="CHEBI:24875"/>
    </ligand>
</feature>
<feature type="binding site" evidence="1">
    <location>
        <position position="341"/>
    </location>
    <ligand>
        <name>Fe cation</name>
        <dbReference type="ChEBI" id="CHEBI:24875"/>
    </ligand>
</feature>
<feature type="binding site" evidence="1">
    <location>
        <position position="371"/>
    </location>
    <ligand>
        <name>Fe cation</name>
        <dbReference type="ChEBI" id="CHEBI:24875"/>
    </ligand>
</feature>
<feature type="modified residue" description="N6-acetyllysine" evidence="1">
    <location>
        <position position="98"/>
    </location>
</feature>
<feature type="modified residue" description="N6-succinyllysine" evidence="4">
    <location>
        <position position="414"/>
    </location>
</feature>
<feature type="sequence conflict" description="In Ref. 1; AAC53224." evidence="3" ref="1">
    <original>A</original>
    <variation>T</variation>
    <location>
        <position position="267"/>
    </location>
</feature>
<evidence type="ECO:0000250" key="1">
    <source>
        <dbReference type="UniProtKB" id="Q93099"/>
    </source>
</evidence>
<evidence type="ECO:0000269" key="2">
    <source>
    </source>
</evidence>
<evidence type="ECO:0000305" key="3"/>
<evidence type="ECO:0007744" key="4">
    <source>
    </source>
</evidence>
<proteinExistence type="evidence at protein level"/>
<comment type="function">
    <text evidence="2">Catalyzes the conversion of homogentisate to maleylacetoacetate.</text>
</comment>
<comment type="catalytic activity">
    <reaction evidence="2">
        <text>homogentisate + O2 = 4-maleylacetoacetate + H(+)</text>
        <dbReference type="Rhea" id="RHEA:15449"/>
        <dbReference type="ChEBI" id="CHEBI:15378"/>
        <dbReference type="ChEBI" id="CHEBI:15379"/>
        <dbReference type="ChEBI" id="CHEBI:16169"/>
        <dbReference type="ChEBI" id="CHEBI:17105"/>
        <dbReference type="EC" id="1.13.11.5"/>
    </reaction>
    <physiologicalReaction direction="left-to-right" evidence="2">
        <dbReference type="Rhea" id="RHEA:15450"/>
    </physiologicalReaction>
</comment>
<comment type="cofactor">
    <cofactor evidence="2">
        <name>Fe cation</name>
        <dbReference type="ChEBI" id="CHEBI:24875"/>
    </cofactor>
</comment>
<comment type="biophysicochemical properties">
    <kinetics>
        <KM evidence="2">188 uM for homogentisate</KM>
    </kinetics>
    <phDependence>
        <text evidence="2">Optimum pH is 6.1.</text>
    </phDependence>
</comment>
<comment type="pathway">
    <text>Amino-acid degradation; L-phenylalanine degradation; acetoacetate and fumarate from L-phenylalanine: step 4/6.</text>
</comment>
<comment type="subunit">
    <text evidence="1">Homohexamer arranged as a dimer of trimers.</text>
</comment>
<comment type="disease">
    <text>Defects in Hgd are the cause of alkaptonuria (aku). Aku is an autosomal recessive error of metabolism which is characterized by an increase in the level of homogentisic acid.</text>
</comment>
<comment type="similarity">
    <text evidence="3">Belongs to the homogentisate dioxygenase family.</text>
</comment>
<name>HGD_MOUSE</name>
<keyword id="KW-0007">Acetylation</keyword>
<keyword id="KW-0223">Dioxygenase</keyword>
<keyword id="KW-0903">Direct protein sequencing</keyword>
<keyword id="KW-0408">Iron</keyword>
<keyword id="KW-0479">Metal-binding</keyword>
<keyword id="KW-0560">Oxidoreductase</keyword>
<keyword id="KW-0585">Phenylalanine catabolism</keyword>
<keyword id="KW-1185">Reference proteome</keyword>
<keyword id="KW-0828">Tyrosine catabolism</keyword>
<accession>O09173</accession>
<accession>Q7TPP2</accession>
<protein>
    <recommendedName>
        <fullName>Homogentisate 1,2-dioxygenase</fullName>
        <ecNumber evidence="2">1.13.11.5</ecNumber>
    </recommendedName>
    <alternativeName>
        <fullName>Homogentisate oxygenase</fullName>
    </alternativeName>
    <alternativeName>
        <fullName>Homogentisic acid oxidase</fullName>
    </alternativeName>
    <alternativeName>
        <fullName>Homogentisicase</fullName>
    </alternativeName>
</protein>
<dbReference type="EC" id="1.13.11.5" evidence="2"/>
<dbReference type="EMBL" id="U58988">
    <property type="protein sequence ID" value="AAC53224.1"/>
    <property type="molecule type" value="mRNA"/>
</dbReference>
<dbReference type="EMBL" id="CH466521">
    <property type="protein sequence ID" value="EDK97961.1"/>
    <property type="molecule type" value="Genomic_DNA"/>
</dbReference>
<dbReference type="EMBL" id="BC055029">
    <property type="protein sequence ID" value="AAH55029.1"/>
    <property type="molecule type" value="mRNA"/>
</dbReference>
<dbReference type="CCDS" id="CCDS49849.1"/>
<dbReference type="RefSeq" id="NP_038575.2">
    <property type="nucleotide sequence ID" value="NM_013547.3"/>
</dbReference>
<dbReference type="RefSeq" id="XP_030104838.1">
    <property type="nucleotide sequence ID" value="XM_030248978.1"/>
</dbReference>
<dbReference type="SMR" id="O09173"/>
<dbReference type="BioGRID" id="200293">
    <property type="interactions" value="1"/>
</dbReference>
<dbReference type="FunCoup" id="O09173">
    <property type="interactions" value="67"/>
</dbReference>
<dbReference type="STRING" id="10090.ENSMUSP00000125492"/>
<dbReference type="GlyGen" id="O09173">
    <property type="glycosylation" value="1 site, 1 O-linked glycan (1 site)"/>
</dbReference>
<dbReference type="iPTMnet" id="O09173"/>
<dbReference type="PhosphoSitePlus" id="O09173"/>
<dbReference type="SwissPalm" id="O09173"/>
<dbReference type="jPOST" id="O09173"/>
<dbReference type="PaxDb" id="10090-ENSMUSP00000125492"/>
<dbReference type="PeptideAtlas" id="O09173"/>
<dbReference type="ProteomicsDB" id="269784"/>
<dbReference type="Antibodypedia" id="32802">
    <property type="antibodies" value="246 antibodies from 30 providers"/>
</dbReference>
<dbReference type="DNASU" id="15233"/>
<dbReference type="Ensembl" id="ENSMUST00000160847.2">
    <property type="protein sequence ID" value="ENSMUSP00000125492.2"/>
    <property type="gene ID" value="ENSMUSG00000022821.14"/>
</dbReference>
<dbReference type="GeneID" id="15233"/>
<dbReference type="KEGG" id="mmu:15233"/>
<dbReference type="UCSC" id="uc007zeg.2">
    <property type="organism name" value="mouse"/>
</dbReference>
<dbReference type="AGR" id="MGI:96078"/>
<dbReference type="CTD" id="3081"/>
<dbReference type="MGI" id="MGI:96078">
    <property type="gene designation" value="Hgd"/>
</dbReference>
<dbReference type="VEuPathDB" id="HostDB:ENSMUSG00000022821"/>
<dbReference type="eggNOG" id="KOG1417">
    <property type="taxonomic scope" value="Eukaryota"/>
</dbReference>
<dbReference type="GeneTree" id="ENSGT00390000004601"/>
<dbReference type="HOGENOM" id="CLU_027174_0_0_1"/>
<dbReference type="InParanoid" id="O09173"/>
<dbReference type="OMA" id="MLPHGPD"/>
<dbReference type="OrthoDB" id="1689029at2759"/>
<dbReference type="PhylomeDB" id="O09173"/>
<dbReference type="TreeFam" id="TF300490"/>
<dbReference type="Reactome" id="R-MMU-8963684">
    <property type="pathway name" value="Tyrosine catabolism"/>
</dbReference>
<dbReference type="SABIO-RK" id="O09173"/>
<dbReference type="UniPathway" id="UPA00139">
    <property type="reaction ID" value="UER00339"/>
</dbReference>
<dbReference type="BioGRID-ORCS" id="15233">
    <property type="hits" value="2 hits in 78 CRISPR screens"/>
</dbReference>
<dbReference type="ChiTaRS" id="Hgd">
    <property type="organism name" value="mouse"/>
</dbReference>
<dbReference type="PRO" id="PR:O09173"/>
<dbReference type="Proteomes" id="UP000000589">
    <property type="component" value="Chromosome 16"/>
</dbReference>
<dbReference type="RNAct" id="O09173">
    <property type="molecule type" value="protein"/>
</dbReference>
<dbReference type="Bgee" id="ENSMUSG00000022821">
    <property type="expression patterns" value="Expressed in left lobe of liver and 97 other cell types or tissues"/>
</dbReference>
<dbReference type="ExpressionAtlas" id="O09173">
    <property type="expression patterns" value="baseline and differential"/>
</dbReference>
<dbReference type="GO" id="GO:0004411">
    <property type="term" value="F:homogentisate 1,2-dioxygenase activity"/>
    <property type="evidence" value="ECO:0000314"/>
    <property type="project" value="UniProtKB"/>
</dbReference>
<dbReference type="GO" id="GO:0042802">
    <property type="term" value="F:identical protein binding"/>
    <property type="evidence" value="ECO:0007669"/>
    <property type="project" value="Ensembl"/>
</dbReference>
<dbReference type="GO" id="GO:0046872">
    <property type="term" value="F:metal ion binding"/>
    <property type="evidence" value="ECO:0007669"/>
    <property type="project" value="UniProtKB-KW"/>
</dbReference>
<dbReference type="GO" id="GO:0006520">
    <property type="term" value="P:amino acid metabolic process"/>
    <property type="evidence" value="ECO:0000315"/>
    <property type="project" value="MGI"/>
</dbReference>
<dbReference type="GO" id="GO:0006559">
    <property type="term" value="P:L-phenylalanine catabolic process"/>
    <property type="evidence" value="ECO:0007669"/>
    <property type="project" value="UniProtKB-UniPathway"/>
</dbReference>
<dbReference type="GO" id="GO:0006572">
    <property type="term" value="P:tyrosine catabolic process"/>
    <property type="evidence" value="ECO:0007669"/>
    <property type="project" value="UniProtKB-KW"/>
</dbReference>
<dbReference type="CDD" id="cd07000">
    <property type="entry name" value="cupin_HGO_N"/>
    <property type="match status" value="1"/>
</dbReference>
<dbReference type="FunFam" id="2.60.120.10:FF:000026">
    <property type="entry name" value="Homogentisate 1,2-dioxygenase"/>
    <property type="match status" value="1"/>
</dbReference>
<dbReference type="Gene3D" id="2.60.120.10">
    <property type="entry name" value="Jelly Rolls"/>
    <property type="match status" value="1"/>
</dbReference>
<dbReference type="InterPro" id="IPR046451">
    <property type="entry name" value="HgmA_C"/>
</dbReference>
<dbReference type="InterPro" id="IPR046452">
    <property type="entry name" value="HgmA_N"/>
</dbReference>
<dbReference type="InterPro" id="IPR005708">
    <property type="entry name" value="Homogentis_dOase"/>
</dbReference>
<dbReference type="InterPro" id="IPR014710">
    <property type="entry name" value="RmlC-like_jellyroll"/>
</dbReference>
<dbReference type="InterPro" id="IPR011051">
    <property type="entry name" value="RmlC_Cupin_sf"/>
</dbReference>
<dbReference type="NCBIfam" id="TIGR01015">
    <property type="entry name" value="hmgA"/>
    <property type="match status" value="1"/>
</dbReference>
<dbReference type="PANTHER" id="PTHR11056">
    <property type="entry name" value="HOMOGENTISATE 1,2-DIOXYGENASE"/>
    <property type="match status" value="1"/>
</dbReference>
<dbReference type="PANTHER" id="PTHR11056:SF0">
    <property type="entry name" value="HOMOGENTISATE 1,2-DIOXYGENASE"/>
    <property type="match status" value="1"/>
</dbReference>
<dbReference type="Pfam" id="PF04209">
    <property type="entry name" value="HgmA_C"/>
    <property type="match status" value="1"/>
</dbReference>
<dbReference type="Pfam" id="PF20510">
    <property type="entry name" value="HgmA_N"/>
    <property type="match status" value="1"/>
</dbReference>
<dbReference type="SUPFAM" id="SSF51182">
    <property type="entry name" value="RmlC-like cupins"/>
    <property type="match status" value="1"/>
</dbReference>
<gene>
    <name type="primary">Hgd</name>
    <name type="synonym">Aku</name>
    <name type="synonym">Hgo</name>
</gene>
<reference key="1">
    <citation type="journal article" date="1997" name="Mamm. Genome">
        <title>Cloning of the homogentisate 1,2-dioxygenase gene, the key enzyme of alkaptonuria in mouse.</title>
        <authorList>
            <person name="Schmidt S.R."/>
            <person name="Gehrig A."/>
            <person name="Koehler M.R."/>
            <person name="Schmid M."/>
            <person name="Mueller C.R."/>
            <person name="Kress W."/>
        </authorList>
    </citation>
    <scope>NUCLEOTIDE SEQUENCE [MRNA]</scope>
    <scope>PARTIAL PROTEIN SEQUENCE</scope>
    <source>
        <strain>C57BL/6 X CBA</strain>
        <tissue>Liver</tissue>
    </source>
</reference>
<reference key="2">
    <citation type="submission" date="2005-07" db="EMBL/GenBank/DDBJ databases">
        <authorList>
            <person name="Mural R.J."/>
            <person name="Adams M.D."/>
            <person name="Myers E.W."/>
            <person name="Smith H.O."/>
            <person name="Venter J.C."/>
        </authorList>
    </citation>
    <scope>NUCLEOTIDE SEQUENCE [LARGE SCALE GENOMIC DNA]</scope>
</reference>
<reference key="3">
    <citation type="journal article" date="2004" name="Genome Res.">
        <title>The status, quality, and expansion of the NIH full-length cDNA project: the Mammalian Gene Collection (MGC).</title>
        <authorList>
            <consortium name="The MGC Project Team"/>
        </authorList>
    </citation>
    <scope>NUCLEOTIDE SEQUENCE [LARGE SCALE MRNA]</scope>
    <source>
        <strain>FVB/N</strain>
        <tissue>Liver</tissue>
    </source>
</reference>
<reference key="4">
    <citation type="journal article" date="1995" name="Eur. J. Biochem.">
        <title>Murine liver homogentisate 1,2-dioxygenase. Purification to homogeneity and novel biochemical properties.</title>
        <authorList>
            <person name="Schmidt S.R."/>
            <person name="Muller C.R."/>
            <person name="Kress W."/>
        </authorList>
    </citation>
    <scope>FUNCTION</scope>
    <scope>CATALYTIC ACTIVITY</scope>
    <scope>BIOPHYSICOCHEMICAL PROPERTIES</scope>
    <scope>COFACTOR</scope>
    <source>
        <tissue>Liver</tissue>
    </source>
</reference>
<reference key="5">
    <citation type="journal article" date="2010" name="Cell">
        <title>A tissue-specific atlas of mouse protein phosphorylation and expression.</title>
        <authorList>
            <person name="Huttlin E.L."/>
            <person name="Jedrychowski M.P."/>
            <person name="Elias J.E."/>
            <person name="Goswami T."/>
            <person name="Rad R."/>
            <person name="Beausoleil S.A."/>
            <person name="Villen J."/>
            <person name="Haas W."/>
            <person name="Sowa M.E."/>
            <person name="Gygi S.P."/>
        </authorList>
    </citation>
    <scope>IDENTIFICATION BY MASS SPECTROMETRY [LARGE SCALE ANALYSIS]</scope>
    <source>
        <tissue>Kidney</tissue>
        <tissue>Liver</tissue>
    </source>
</reference>
<reference key="6">
    <citation type="journal article" date="2013" name="Mol. Cell">
        <title>SIRT5-mediated lysine desuccinylation impacts diverse metabolic pathways.</title>
        <authorList>
            <person name="Park J."/>
            <person name="Chen Y."/>
            <person name="Tishkoff D.X."/>
            <person name="Peng C."/>
            <person name="Tan M."/>
            <person name="Dai L."/>
            <person name="Xie Z."/>
            <person name="Zhang Y."/>
            <person name="Zwaans B.M."/>
            <person name="Skinner M.E."/>
            <person name="Lombard D.B."/>
            <person name="Zhao Y."/>
        </authorList>
    </citation>
    <scope>SUCCINYLATION [LARGE SCALE ANALYSIS] AT LYS-414</scope>
    <scope>IDENTIFICATION BY MASS SPECTROMETRY [LARGE SCALE ANALYSIS]</scope>
    <source>
        <tissue>Liver</tissue>
    </source>
</reference>